<keyword id="KW-0030">Aminoacyl-tRNA synthetase</keyword>
<keyword id="KW-0067">ATP-binding</keyword>
<keyword id="KW-0963">Cytoplasm</keyword>
<keyword id="KW-0436">Ligase</keyword>
<keyword id="KW-0460">Magnesium</keyword>
<keyword id="KW-0479">Metal-binding</keyword>
<keyword id="KW-0547">Nucleotide-binding</keyword>
<keyword id="KW-0648">Protein biosynthesis</keyword>
<evidence type="ECO:0000255" key="1">
    <source>
        <dbReference type="HAMAP-Rule" id="MF_00252"/>
    </source>
</evidence>
<gene>
    <name evidence="1" type="primary">lysS</name>
    <name type="ordered locus">RL4185</name>
</gene>
<accession>Q1MBK9</accession>
<protein>
    <recommendedName>
        <fullName evidence="1">Lysine--tRNA ligase</fullName>
        <ecNumber evidence="1">6.1.1.6</ecNumber>
    </recommendedName>
    <alternativeName>
        <fullName evidence="1">Lysyl-tRNA synthetase</fullName>
        <shortName evidence="1">LysRS</shortName>
    </alternativeName>
</protein>
<sequence length="498" mass="56832">MADNKSENTLSSDATEVRAQKLKLLREQIGEVYPAHFHRTMTNAELIAKYENLEPDVETQDVVTVAGRVYSSRNSGMFMDIHDARGKIQIFSHKDTTPEEARALLPMIDIGDIIGVTGSVRRTKRGELTINAQTITMLTKSLLPMPEKWHGLSDIELRYRKRHLDIMTNEDSKLRFQQRSKILSGIRRFMENDGFMEVETPMLQSVYGGATAEPFKTHHNTLKLDMYLRIAPELFLKRTLISGLTDKVFEVNRNFRNEGVSTRHNPEFTMMECYWAYADYEDIMDLVERLFESLALSIHGTTEFPFGDKTMSFKGPFKRVPMPDAVKEATGIDFRAIKTDEEARVAAKAAGFAVEKDWTWGECLAFIFEEKVESTLIQPSHVTHFPKDISPFAKEVPGEPRLVERFETYCNAWELGNAFSELNDPEEQRRRMVEQLEQAHARGEKEKQLDEEFLDAIDQGMPPAGGLGIGVDRLIMLLTNAPSIRDVILFPARRSKAD</sequence>
<comment type="catalytic activity">
    <reaction evidence="1">
        <text>tRNA(Lys) + L-lysine + ATP = L-lysyl-tRNA(Lys) + AMP + diphosphate</text>
        <dbReference type="Rhea" id="RHEA:20792"/>
        <dbReference type="Rhea" id="RHEA-COMP:9696"/>
        <dbReference type="Rhea" id="RHEA-COMP:9697"/>
        <dbReference type="ChEBI" id="CHEBI:30616"/>
        <dbReference type="ChEBI" id="CHEBI:32551"/>
        <dbReference type="ChEBI" id="CHEBI:33019"/>
        <dbReference type="ChEBI" id="CHEBI:78442"/>
        <dbReference type="ChEBI" id="CHEBI:78529"/>
        <dbReference type="ChEBI" id="CHEBI:456215"/>
        <dbReference type="EC" id="6.1.1.6"/>
    </reaction>
</comment>
<comment type="cofactor">
    <cofactor evidence="1">
        <name>Mg(2+)</name>
        <dbReference type="ChEBI" id="CHEBI:18420"/>
    </cofactor>
    <text evidence="1">Binds 3 Mg(2+) ions per subunit.</text>
</comment>
<comment type="subunit">
    <text evidence="1">Homodimer.</text>
</comment>
<comment type="subcellular location">
    <subcellularLocation>
        <location evidence="1">Cytoplasm</location>
    </subcellularLocation>
</comment>
<comment type="similarity">
    <text evidence="1">Belongs to the class-II aminoacyl-tRNA synthetase family.</text>
</comment>
<dbReference type="EC" id="6.1.1.6" evidence="1"/>
<dbReference type="EMBL" id="AM236080">
    <property type="protein sequence ID" value="CAK09674.1"/>
    <property type="molecule type" value="Genomic_DNA"/>
</dbReference>
<dbReference type="RefSeq" id="WP_011653585.1">
    <property type="nucleotide sequence ID" value="NC_008380.1"/>
</dbReference>
<dbReference type="SMR" id="Q1MBK9"/>
<dbReference type="EnsemblBacteria" id="CAK09674">
    <property type="protein sequence ID" value="CAK09674"/>
    <property type="gene ID" value="RL4185"/>
</dbReference>
<dbReference type="KEGG" id="rle:RL4185"/>
<dbReference type="eggNOG" id="COG1190">
    <property type="taxonomic scope" value="Bacteria"/>
</dbReference>
<dbReference type="HOGENOM" id="CLU_008255_6_0_5"/>
<dbReference type="Proteomes" id="UP000006575">
    <property type="component" value="Chromosome"/>
</dbReference>
<dbReference type="GO" id="GO:0005829">
    <property type="term" value="C:cytosol"/>
    <property type="evidence" value="ECO:0007669"/>
    <property type="project" value="TreeGrafter"/>
</dbReference>
<dbReference type="GO" id="GO:0005524">
    <property type="term" value="F:ATP binding"/>
    <property type="evidence" value="ECO:0007669"/>
    <property type="project" value="UniProtKB-UniRule"/>
</dbReference>
<dbReference type="GO" id="GO:0004824">
    <property type="term" value="F:lysine-tRNA ligase activity"/>
    <property type="evidence" value="ECO:0007669"/>
    <property type="project" value="UniProtKB-UniRule"/>
</dbReference>
<dbReference type="GO" id="GO:0000287">
    <property type="term" value="F:magnesium ion binding"/>
    <property type="evidence" value="ECO:0007669"/>
    <property type="project" value="UniProtKB-UniRule"/>
</dbReference>
<dbReference type="GO" id="GO:0000049">
    <property type="term" value="F:tRNA binding"/>
    <property type="evidence" value="ECO:0007669"/>
    <property type="project" value="TreeGrafter"/>
</dbReference>
<dbReference type="GO" id="GO:0006430">
    <property type="term" value="P:lysyl-tRNA aminoacylation"/>
    <property type="evidence" value="ECO:0007669"/>
    <property type="project" value="UniProtKB-UniRule"/>
</dbReference>
<dbReference type="CDD" id="cd00775">
    <property type="entry name" value="LysRS_core"/>
    <property type="match status" value="1"/>
</dbReference>
<dbReference type="CDD" id="cd04322">
    <property type="entry name" value="LysRS_N"/>
    <property type="match status" value="1"/>
</dbReference>
<dbReference type="Gene3D" id="3.30.930.10">
    <property type="entry name" value="Bira Bifunctional Protein, Domain 2"/>
    <property type="match status" value="1"/>
</dbReference>
<dbReference type="Gene3D" id="2.40.50.140">
    <property type="entry name" value="Nucleic acid-binding proteins"/>
    <property type="match status" value="1"/>
</dbReference>
<dbReference type="HAMAP" id="MF_00252">
    <property type="entry name" value="Lys_tRNA_synth_class2"/>
    <property type="match status" value="1"/>
</dbReference>
<dbReference type="InterPro" id="IPR004364">
    <property type="entry name" value="Aa-tRNA-synt_II"/>
</dbReference>
<dbReference type="InterPro" id="IPR006195">
    <property type="entry name" value="aa-tRNA-synth_II"/>
</dbReference>
<dbReference type="InterPro" id="IPR045864">
    <property type="entry name" value="aa-tRNA-synth_II/BPL/LPL"/>
</dbReference>
<dbReference type="InterPro" id="IPR002313">
    <property type="entry name" value="Lys-tRNA-ligase_II"/>
</dbReference>
<dbReference type="InterPro" id="IPR044136">
    <property type="entry name" value="Lys-tRNA-ligase_II_N"/>
</dbReference>
<dbReference type="InterPro" id="IPR018149">
    <property type="entry name" value="Lys-tRNA-synth_II_C"/>
</dbReference>
<dbReference type="InterPro" id="IPR012340">
    <property type="entry name" value="NA-bd_OB-fold"/>
</dbReference>
<dbReference type="InterPro" id="IPR004365">
    <property type="entry name" value="NA-bd_OB_tRNA"/>
</dbReference>
<dbReference type="NCBIfam" id="TIGR00499">
    <property type="entry name" value="lysS_bact"/>
    <property type="match status" value="1"/>
</dbReference>
<dbReference type="NCBIfam" id="NF001756">
    <property type="entry name" value="PRK00484.1"/>
    <property type="match status" value="1"/>
</dbReference>
<dbReference type="PANTHER" id="PTHR42918:SF15">
    <property type="entry name" value="LYSINE--TRNA LIGASE, CHLOROPLASTIC_MITOCHONDRIAL"/>
    <property type="match status" value="1"/>
</dbReference>
<dbReference type="PANTHER" id="PTHR42918">
    <property type="entry name" value="LYSYL-TRNA SYNTHETASE"/>
    <property type="match status" value="1"/>
</dbReference>
<dbReference type="Pfam" id="PF00152">
    <property type="entry name" value="tRNA-synt_2"/>
    <property type="match status" value="1"/>
</dbReference>
<dbReference type="Pfam" id="PF01336">
    <property type="entry name" value="tRNA_anti-codon"/>
    <property type="match status" value="1"/>
</dbReference>
<dbReference type="PRINTS" id="PR00982">
    <property type="entry name" value="TRNASYNTHLYS"/>
</dbReference>
<dbReference type="SUPFAM" id="SSF55681">
    <property type="entry name" value="Class II aaRS and biotin synthetases"/>
    <property type="match status" value="1"/>
</dbReference>
<dbReference type="SUPFAM" id="SSF50249">
    <property type="entry name" value="Nucleic acid-binding proteins"/>
    <property type="match status" value="1"/>
</dbReference>
<dbReference type="PROSITE" id="PS50862">
    <property type="entry name" value="AA_TRNA_LIGASE_II"/>
    <property type="match status" value="1"/>
</dbReference>
<reference key="1">
    <citation type="journal article" date="2006" name="Genome Biol.">
        <title>The genome of Rhizobium leguminosarum has recognizable core and accessory components.</title>
        <authorList>
            <person name="Young J.P.W."/>
            <person name="Crossman L.C."/>
            <person name="Johnston A.W.B."/>
            <person name="Thomson N.R."/>
            <person name="Ghazoui Z.F."/>
            <person name="Hull K.H."/>
            <person name="Wexler M."/>
            <person name="Curson A.R.J."/>
            <person name="Todd J.D."/>
            <person name="Poole P.S."/>
            <person name="Mauchline T.H."/>
            <person name="East A.K."/>
            <person name="Quail M.A."/>
            <person name="Churcher C."/>
            <person name="Arrowsmith C."/>
            <person name="Cherevach I."/>
            <person name="Chillingworth T."/>
            <person name="Clarke K."/>
            <person name="Cronin A."/>
            <person name="Davis P."/>
            <person name="Fraser A."/>
            <person name="Hance Z."/>
            <person name="Hauser H."/>
            <person name="Jagels K."/>
            <person name="Moule S."/>
            <person name="Mungall K."/>
            <person name="Norbertczak H."/>
            <person name="Rabbinowitsch E."/>
            <person name="Sanders M."/>
            <person name="Simmonds M."/>
            <person name="Whitehead S."/>
            <person name="Parkhill J."/>
        </authorList>
    </citation>
    <scope>NUCLEOTIDE SEQUENCE [LARGE SCALE GENOMIC DNA]</scope>
    <source>
        <strain>DSM 114642 / LMG 32736 / 3841</strain>
    </source>
</reference>
<organism>
    <name type="scientific">Rhizobium johnstonii (strain DSM 114642 / LMG 32736 / 3841)</name>
    <name type="common">Rhizobium leguminosarum bv. viciae</name>
    <dbReference type="NCBI Taxonomy" id="216596"/>
    <lineage>
        <taxon>Bacteria</taxon>
        <taxon>Pseudomonadati</taxon>
        <taxon>Pseudomonadota</taxon>
        <taxon>Alphaproteobacteria</taxon>
        <taxon>Hyphomicrobiales</taxon>
        <taxon>Rhizobiaceae</taxon>
        <taxon>Rhizobium/Agrobacterium group</taxon>
        <taxon>Rhizobium</taxon>
        <taxon>Rhizobium johnstonii</taxon>
    </lineage>
</organism>
<name>SYK_RHIJ3</name>
<feature type="chain" id="PRO_1000012921" description="Lysine--tRNA ligase">
    <location>
        <begin position="1"/>
        <end position="498"/>
    </location>
</feature>
<feature type="binding site" evidence="1">
    <location>
        <position position="407"/>
    </location>
    <ligand>
        <name>Mg(2+)</name>
        <dbReference type="ChEBI" id="CHEBI:18420"/>
        <label>1</label>
    </ligand>
</feature>
<feature type="binding site" evidence="1">
    <location>
        <position position="414"/>
    </location>
    <ligand>
        <name>Mg(2+)</name>
        <dbReference type="ChEBI" id="CHEBI:18420"/>
        <label>1</label>
    </ligand>
</feature>
<feature type="binding site" evidence="1">
    <location>
        <position position="414"/>
    </location>
    <ligand>
        <name>Mg(2+)</name>
        <dbReference type="ChEBI" id="CHEBI:18420"/>
        <label>2</label>
    </ligand>
</feature>
<proteinExistence type="inferred from homology"/>